<comment type="catalytic activity">
    <reaction evidence="1">
        <text>2-(N(omega)-L-arginino)succinate = fumarate + L-arginine</text>
        <dbReference type="Rhea" id="RHEA:24020"/>
        <dbReference type="ChEBI" id="CHEBI:29806"/>
        <dbReference type="ChEBI" id="CHEBI:32682"/>
        <dbReference type="ChEBI" id="CHEBI:57472"/>
        <dbReference type="EC" id="4.3.2.1"/>
    </reaction>
</comment>
<comment type="pathway">
    <text evidence="1">Amino-acid biosynthesis; L-arginine biosynthesis; L-arginine from L-ornithine and carbamoyl phosphate: step 3/3.</text>
</comment>
<comment type="subcellular location">
    <subcellularLocation>
        <location evidence="1">Cytoplasm</location>
    </subcellularLocation>
</comment>
<comment type="similarity">
    <text evidence="1">Belongs to the lyase 1 family. Argininosuccinate lyase subfamily.</text>
</comment>
<proteinExistence type="inferred from homology"/>
<organism>
    <name type="scientific">Heliobacterium mobile</name>
    <name type="common">Heliobacillus mobilis</name>
    <dbReference type="NCBI Taxonomy" id="28064"/>
    <lineage>
        <taxon>Bacteria</taxon>
        <taxon>Bacillati</taxon>
        <taxon>Bacillota</taxon>
        <taxon>Clostridia</taxon>
        <taxon>Eubacteriales</taxon>
        <taxon>Heliobacteriaceae</taxon>
        <taxon>Heliobacterium</taxon>
    </lineage>
</organism>
<dbReference type="EC" id="4.3.2.1" evidence="1"/>
<dbReference type="EMBL" id="AY142879">
    <property type="protein sequence ID" value="AAN87483.1"/>
    <property type="molecule type" value="Genomic_DNA"/>
</dbReference>
<dbReference type="RefSeq" id="WP_170291773.1">
    <property type="nucleotide sequence ID" value="NZ_WNKU01000006.1"/>
</dbReference>
<dbReference type="SMR" id="Q8GDU5"/>
<dbReference type="UniPathway" id="UPA00068">
    <property type="reaction ID" value="UER00114"/>
</dbReference>
<dbReference type="GO" id="GO:0005829">
    <property type="term" value="C:cytosol"/>
    <property type="evidence" value="ECO:0007669"/>
    <property type="project" value="TreeGrafter"/>
</dbReference>
<dbReference type="GO" id="GO:0004056">
    <property type="term" value="F:argininosuccinate lyase activity"/>
    <property type="evidence" value="ECO:0007669"/>
    <property type="project" value="UniProtKB-EC"/>
</dbReference>
<dbReference type="GO" id="GO:0042450">
    <property type="term" value="P:arginine biosynthetic process via ornithine"/>
    <property type="evidence" value="ECO:0007669"/>
    <property type="project" value="InterPro"/>
</dbReference>
<dbReference type="GO" id="GO:0006526">
    <property type="term" value="P:L-arginine biosynthetic process"/>
    <property type="evidence" value="ECO:0007669"/>
    <property type="project" value="UniProtKB-UniPathway"/>
</dbReference>
<dbReference type="CDD" id="cd01359">
    <property type="entry name" value="Argininosuccinate_lyase"/>
    <property type="match status" value="1"/>
</dbReference>
<dbReference type="FunFam" id="1.10.275.10:FF:000002">
    <property type="entry name" value="Argininosuccinate lyase"/>
    <property type="match status" value="1"/>
</dbReference>
<dbReference type="FunFam" id="1.10.40.30:FF:000001">
    <property type="entry name" value="Argininosuccinate lyase"/>
    <property type="match status" value="1"/>
</dbReference>
<dbReference type="FunFam" id="1.20.200.10:FF:000002">
    <property type="entry name" value="Argininosuccinate lyase"/>
    <property type="match status" value="1"/>
</dbReference>
<dbReference type="Gene3D" id="1.10.40.30">
    <property type="entry name" value="Fumarase/aspartase (C-terminal domain)"/>
    <property type="match status" value="1"/>
</dbReference>
<dbReference type="Gene3D" id="1.20.200.10">
    <property type="entry name" value="Fumarase/aspartase (Central domain)"/>
    <property type="match status" value="1"/>
</dbReference>
<dbReference type="Gene3D" id="1.10.275.10">
    <property type="entry name" value="Fumarase/aspartase (N-terminal domain)"/>
    <property type="match status" value="1"/>
</dbReference>
<dbReference type="HAMAP" id="MF_00006">
    <property type="entry name" value="Arg_succ_lyase"/>
    <property type="match status" value="1"/>
</dbReference>
<dbReference type="InterPro" id="IPR029419">
    <property type="entry name" value="Arg_succ_lyase_C"/>
</dbReference>
<dbReference type="InterPro" id="IPR009049">
    <property type="entry name" value="Argininosuccinate_lyase"/>
</dbReference>
<dbReference type="InterPro" id="IPR024083">
    <property type="entry name" value="Fumarase/histidase_N"/>
</dbReference>
<dbReference type="InterPro" id="IPR020557">
    <property type="entry name" value="Fumarate_lyase_CS"/>
</dbReference>
<dbReference type="InterPro" id="IPR000362">
    <property type="entry name" value="Fumarate_lyase_fam"/>
</dbReference>
<dbReference type="InterPro" id="IPR022761">
    <property type="entry name" value="Fumarate_lyase_N"/>
</dbReference>
<dbReference type="InterPro" id="IPR008948">
    <property type="entry name" value="L-Aspartase-like"/>
</dbReference>
<dbReference type="NCBIfam" id="TIGR00838">
    <property type="entry name" value="argH"/>
    <property type="match status" value="1"/>
</dbReference>
<dbReference type="PANTHER" id="PTHR43814">
    <property type="entry name" value="ARGININOSUCCINATE LYASE"/>
    <property type="match status" value="1"/>
</dbReference>
<dbReference type="PANTHER" id="PTHR43814:SF1">
    <property type="entry name" value="ARGININOSUCCINATE LYASE"/>
    <property type="match status" value="1"/>
</dbReference>
<dbReference type="Pfam" id="PF14698">
    <property type="entry name" value="ASL_C2"/>
    <property type="match status" value="1"/>
</dbReference>
<dbReference type="Pfam" id="PF00206">
    <property type="entry name" value="Lyase_1"/>
    <property type="match status" value="1"/>
</dbReference>
<dbReference type="PRINTS" id="PR00145">
    <property type="entry name" value="ARGSUCLYASE"/>
</dbReference>
<dbReference type="PRINTS" id="PR00149">
    <property type="entry name" value="FUMRATELYASE"/>
</dbReference>
<dbReference type="SUPFAM" id="SSF48557">
    <property type="entry name" value="L-aspartase-like"/>
    <property type="match status" value="1"/>
</dbReference>
<dbReference type="PROSITE" id="PS00163">
    <property type="entry name" value="FUMARATE_LYASES"/>
    <property type="match status" value="1"/>
</dbReference>
<name>ARLY_HELMO</name>
<feature type="chain" id="PRO_0000137778" description="Argininosuccinate lyase">
    <location>
        <begin position="1"/>
        <end position="458" status="greater than"/>
    </location>
</feature>
<feature type="non-terminal residue">
    <location>
        <position position="458"/>
    </location>
</feature>
<protein>
    <recommendedName>
        <fullName evidence="1">Argininosuccinate lyase</fullName>
        <shortName evidence="1">ASAL</shortName>
        <ecNumber evidence="1">4.3.2.1</ecNumber>
    </recommendedName>
    <alternativeName>
        <fullName evidence="1">Arginosuccinase</fullName>
    </alternativeName>
</protein>
<evidence type="ECO:0000255" key="1">
    <source>
        <dbReference type="HAMAP-Rule" id="MF_00006"/>
    </source>
</evidence>
<accession>Q8GDU5</accession>
<reference key="1">
    <citation type="journal article" date="2002" name="Science">
        <title>Whole-genome analysis of photosynthetic prokaryotes.</title>
        <authorList>
            <person name="Raymond J."/>
            <person name="Zhaxybayeva O."/>
            <person name="Gogarten J.P."/>
            <person name="Gerdes S.Y."/>
            <person name="Blankenship R.E."/>
        </authorList>
    </citation>
    <scope>NUCLEOTIDE SEQUENCE [GENOMIC DNA]</scope>
</reference>
<keyword id="KW-0028">Amino-acid biosynthesis</keyword>
<keyword id="KW-0055">Arginine biosynthesis</keyword>
<keyword id="KW-0963">Cytoplasm</keyword>
<keyword id="KW-0456">Lyase</keyword>
<sequence>MSKKLWGGRFEKGTDKVVEDFHSSIRFDQRLYKQDIRGSIAHARMLGRQGIIAASEAEQIIEGLEKIMADIEAGRVEFDVAAEDIHMNIEKILTERIGDVGKKLHTGRSRNDQVALDVRLYLRDEITETGRLLRELITVLLERAEEHVDTIMPGYTHLQKAQPITLAHHLLAYVQMFGRDCSRLVDCAKRFNISPLGSGALAGTTFPLDRMAVAQELGFDGITENSLDGVSDRDFAIEFCGAASLIMMHLSRFCEEIILWSSQEFSFIELDDAYSTGSSMMPQKKNPDVAELIRGKTGRVYGDLMALLTVMKSLPLAYNKDMQEDKENLFDAVDTVKGCLAVFTPMIRTMRVRGERMKAGAKGGFTNATDVADYLAKKGVSFREAHEIVGKMVLMCVQKSVALEDLSFEDFRACSEAFEEDVFDAIRVERCVADRKVPGGPAPDAVKAAIQAARERLS</sequence>